<organism>
    <name type="scientific">Shigella flexneri serotype 5b (strain 8401)</name>
    <dbReference type="NCBI Taxonomy" id="373384"/>
    <lineage>
        <taxon>Bacteria</taxon>
        <taxon>Pseudomonadati</taxon>
        <taxon>Pseudomonadota</taxon>
        <taxon>Gammaproteobacteria</taxon>
        <taxon>Enterobacterales</taxon>
        <taxon>Enterobacteriaceae</taxon>
        <taxon>Shigella</taxon>
    </lineage>
</organism>
<gene>
    <name evidence="1" type="primary">gsiC</name>
    <name type="ordered locus">SFV_0814</name>
</gene>
<evidence type="ECO:0000250" key="1">
    <source>
        <dbReference type="UniProtKB" id="P75798"/>
    </source>
</evidence>
<evidence type="ECO:0000255" key="2"/>
<evidence type="ECO:0000255" key="3">
    <source>
        <dbReference type="PROSITE-ProRule" id="PRU00441"/>
    </source>
</evidence>
<evidence type="ECO:0000305" key="4"/>
<reference key="1">
    <citation type="journal article" date="2006" name="BMC Genomics">
        <title>Complete genome sequence of Shigella flexneri 5b and comparison with Shigella flexneri 2a.</title>
        <authorList>
            <person name="Nie H."/>
            <person name="Yang F."/>
            <person name="Zhang X."/>
            <person name="Yang J."/>
            <person name="Chen L."/>
            <person name="Wang J."/>
            <person name="Xiong Z."/>
            <person name="Peng J."/>
            <person name="Sun L."/>
            <person name="Dong J."/>
            <person name="Xue Y."/>
            <person name="Xu X."/>
            <person name="Chen S."/>
            <person name="Yao Z."/>
            <person name="Shen Y."/>
            <person name="Jin Q."/>
        </authorList>
    </citation>
    <scope>NUCLEOTIDE SEQUENCE [LARGE SCALE GENOMIC DNA]</scope>
    <source>
        <strain>8401</strain>
    </source>
</reference>
<feature type="chain" id="PRO_0000280000" description="Glutathione transport system permease protein GsiC">
    <location>
        <begin position="1"/>
        <end position="306"/>
    </location>
</feature>
<feature type="topological domain" description="Cytoplasmic" evidence="2">
    <location>
        <begin position="1"/>
        <end position="8"/>
    </location>
</feature>
<feature type="transmembrane region" description="Helical" evidence="3">
    <location>
        <begin position="9"/>
        <end position="29"/>
    </location>
</feature>
<feature type="topological domain" description="Periplasmic" evidence="2">
    <location>
        <begin position="30"/>
        <end position="102"/>
    </location>
</feature>
<feature type="transmembrane region" description="Helical" evidence="3">
    <location>
        <begin position="103"/>
        <end position="123"/>
    </location>
</feature>
<feature type="topological domain" description="Cytoplasmic" evidence="2">
    <location>
        <begin position="124"/>
        <end position="134"/>
    </location>
</feature>
<feature type="transmembrane region" description="Helical" evidence="3">
    <location>
        <begin position="135"/>
        <end position="155"/>
    </location>
</feature>
<feature type="topological domain" description="Periplasmic" evidence="2">
    <location>
        <begin position="156"/>
        <end position="168"/>
    </location>
</feature>
<feature type="transmembrane region" description="Helical" evidence="3">
    <location>
        <begin position="169"/>
        <end position="189"/>
    </location>
</feature>
<feature type="topological domain" description="Cytoplasmic" evidence="2">
    <location>
        <begin position="190"/>
        <end position="228"/>
    </location>
</feature>
<feature type="transmembrane region" description="Helical" evidence="3">
    <location>
        <begin position="229"/>
        <end position="249"/>
    </location>
</feature>
<feature type="topological domain" description="Periplasmic" evidence="2">
    <location>
        <begin position="250"/>
        <end position="277"/>
    </location>
</feature>
<feature type="transmembrane region" description="Helical" evidence="3">
    <location>
        <begin position="278"/>
        <end position="298"/>
    </location>
</feature>
<feature type="topological domain" description="Cytoplasmic" evidence="2">
    <location>
        <begin position="299"/>
        <end position="306"/>
    </location>
</feature>
<feature type="domain" description="ABC transmembrane type-1" evidence="3">
    <location>
        <begin position="95"/>
        <end position="292"/>
    </location>
</feature>
<dbReference type="EMBL" id="CP000266">
    <property type="protein sequence ID" value="ABF03045.1"/>
    <property type="molecule type" value="Genomic_DNA"/>
</dbReference>
<dbReference type="RefSeq" id="WP_000936032.1">
    <property type="nucleotide sequence ID" value="NC_008258.1"/>
</dbReference>
<dbReference type="SMR" id="Q0T6D1"/>
<dbReference type="KEGG" id="sfv:SFV_0814"/>
<dbReference type="HOGENOM" id="CLU_036879_0_0_6"/>
<dbReference type="Proteomes" id="UP000000659">
    <property type="component" value="Chromosome"/>
</dbReference>
<dbReference type="GO" id="GO:0005886">
    <property type="term" value="C:plasma membrane"/>
    <property type="evidence" value="ECO:0007669"/>
    <property type="project" value="UniProtKB-SubCell"/>
</dbReference>
<dbReference type="GO" id="GO:0055085">
    <property type="term" value="P:transmembrane transport"/>
    <property type="evidence" value="ECO:0007669"/>
    <property type="project" value="InterPro"/>
</dbReference>
<dbReference type="CDD" id="cd06261">
    <property type="entry name" value="TM_PBP2"/>
    <property type="match status" value="1"/>
</dbReference>
<dbReference type="FunFam" id="1.10.3720.10:FF:000024">
    <property type="entry name" value="Glutathione ABC transporter permease GsiC"/>
    <property type="match status" value="1"/>
</dbReference>
<dbReference type="Gene3D" id="1.10.3720.10">
    <property type="entry name" value="MetI-like"/>
    <property type="match status" value="1"/>
</dbReference>
<dbReference type="InterPro" id="IPR045621">
    <property type="entry name" value="BPD_transp_1_N"/>
</dbReference>
<dbReference type="InterPro" id="IPR000515">
    <property type="entry name" value="MetI-like"/>
</dbReference>
<dbReference type="InterPro" id="IPR035906">
    <property type="entry name" value="MetI-like_sf"/>
</dbReference>
<dbReference type="NCBIfam" id="NF011661">
    <property type="entry name" value="PRK15081.1"/>
    <property type="match status" value="1"/>
</dbReference>
<dbReference type="PANTHER" id="PTHR43163">
    <property type="entry name" value="DIPEPTIDE TRANSPORT SYSTEM PERMEASE PROTEIN DPPB-RELATED"/>
    <property type="match status" value="1"/>
</dbReference>
<dbReference type="PANTHER" id="PTHR43163:SF5">
    <property type="entry name" value="GLUTATHIONE TRANSPORT SYSTEM PERMEASE PROTEIN GSIC"/>
    <property type="match status" value="1"/>
</dbReference>
<dbReference type="Pfam" id="PF00528">
    <property type="entry name" value="BPD_transp_1"/>
    <property type="match status" value="1"/>
</dbReference>
<dbReference type="Pfam" id="PF19300">
    <property type="entry name" value="BPD_transp_1_N"/>
    <property type="match status" value="1"/>
</dbReference>
<dbReference type="SUPFAM" id="SSF161098">
    <property type="entry name" value="MetI-like"/>
    <property type="match status" value="1"/>
</dbReference>
<dbReference type="PROSITE" id="PS50928">
    <property type="entry name" value="ABC_TM1"/>
    <property type="match status" value="1"/>
</dbReference>
<comment type="function">
    <text evidence="1">Part of the ABC transporter complex GsiABCD involved in glutathione import. Probably responsible for the translocation of the substrate across the membrane.</text>
</comment>
<comment type="subunit">
    <text evidence="1">The complex is composed of two ATP-binding proteins (GsiA), two transmembrane proteins (GsiC and GsiD) and a solute-binding protein (GsiB).</text>
</comment>
<comment type="subcellular location">
    <subcellularLocation>
        <location evidence="1">Cell inner membrane</location>
        <topology evidence="2">Multi-pass membrane protein</topology>
    </subcellularLocation>
</comment>
<comment type="similarity">
    <text evidence="4">Belongs to the binding-protein-dependent transport system permease family.</text>
</comment>
<proteinExistence type="inferred from homology"/>
<sequence length="306" mass="34100">MLNYVIKRLLGLIPTLFIVSVLVFLFVHMLPGDPARLIAGPEADAQVIELVRQQLGLDQPLYHQFWHYISNAVQGDFGLSMVSRRPVADEIASRFMPTLWLTITSMVWAVIFGMAAGIIAAVWRNRWPDRLSMTIAVSGISFPAFALGMFLIQVFSVELGWLPTVGADSWQHYILPSLTLGAAVAAVMARFTRASFVDVLSEDYMRTARAKGVSETWVVLKHGLRNAMIPVVTMMGLQFGFLLGGSIVVEKVFNWPGLGRLLVDSVEMRDYPVIQAEILLFSLEFILINLVVDVLYAAINPAIRYK</sequence>
<name>GSIC_SHIF8</name>
<keyword id="KW-0997">Cell inner membrane</keyword>
<keyword id="KW-1003">Cell membrane</keyword>
<keyword id="KW-0472">Membrane</keyword>
<keyword id="KW-0812">Transmembrane</keyword>
<keyword id="KW-1133">Transmembrane helix</keyword>
<keyword id="KW-0813">Transport</keyword>
<accession>Q0T6D1</accession>
<protein>
    <recommendedName>
        <fullName evidence="1">Glutathione transport system permease protein GsiC</fullName>
    </recommendedName>
</protein>